<proteinExistence type="evidence at transcript level"/>
<gene>
    <name type="primary">Zmynd10</name>
</gene>
<feature type="chain" id="PRO_0000424815" description="Zinc finger MYND domain-containing protein 10">
    <location>
        <begin position="1"/>
        <end position="440"/>
    </location>
</feature>
<feature type="zinc finger region" description="MYND-type" evidence="4">
    <location>
        <begin position="394"/>
        <end position="430"/>
    </location>
</feature>
<feature type="binding site" evidence="4">
    <location>
        <position position="394"/>
    </location>
    <ligand>
        <name>Zn(2+)</name>
        <dbReference type="ChEBI" id="CHEBI:29105"/>
        <label>1</label>
    </ligand>
</feature>
<feature type="binding site" evidence="4">
    <location>
        <position position="397"/>
    </location>
    <ligand>
        <name>Zn(2+)</name>
        <dbReference type="ChEBI" id="CHEBI:29105"/>
        <label>1</label>
    </ligand>
</feature>
<feature type="binding site" evidence="4">
    <location>
        <position position="405"/>
    </location>
    <ligand>
        <name>Zn(2+)</name>
        <dbReference type="ChEBI" id="CHEBI:29105"/>
        <label>2</label>
    </ligand>
</feature>
<feature type="binding site" evidence="4">
    <location>
        <position position="408"/>
    </location>
    <ligand>
        <name>Zn(2+)</name>
        <dbReference type="ChEBI" id="CHEBI:29105"/>
        <label>2</label>
    </ligand>
</feature>
<feature type="binding site" evidence="4">
    <location>
        <position position="414"/>
    </location>
    <ligand>
        <name>Zn(2+)</name>
        <dbReference type="ChEBI" id="CHEBI:29105"/>
        <label>1</label>
    </ligand>
</feature>
<feature type="binding site" evidence="4">
    <location>
        <position position="418"/>
    </location>
    <ligand>
        <name>Zn(2+)</name>
        <dbReference type="ChEBI" id="CHEBI:29105"/>
        <label>1</label>
    </ligand>
</feature>
<feature type="binding site" evidence="4">
    <location>
        <position position="426"/>
    </location>
    <ligand>
        <name>Zn(2+)</name>
        <dbReference type="ChEBI" id="CHEBI:29105"/>
        <label>2</label>
    </ligand>
</feature>
<feature type="binding site" evidence="4">
    <location>
        <position position="430"/>
    </location>
    <ligand>
        <name>Zn(2+)</name>
        <dbReference type="ChEBI" id="CHEBI:29105"/>
        <label>2</label>
    </ligand>
</feature>
<comment type="function">
    <text evidence="3">Plays a role in axonemal structure organization and motility. Involved in axonemal pre-assembly of inner and outer dynein arms (IDA and ODA, respectively) for proper axoneme building for cilia motility (By similarity). May act by indirectly regulating transcription of dynein proteins (By similarity).</text>
</comment>
<comment type="subunit">
    <text evidence="1">Interacts (via C-terminus) with DNAAF11 (via CS domain); this interaction stabilizes DNAAF11 at the protein level. Interacts (via C-terminus) with DNAL1; this interaction stabilizes DNAL1 at the protein level. Interacts with DNAAF4, HSPA8, IQUB, RUVBL2 and DYNTL5.</text>
</comment>
<comment type="subcellular location">
    <subcellularLocation>
        <location evidence="5">Cytoplasm</location>
    </subcellularLocation>
    <subcellularLocation>
        <location evidence="5">Cytoplasm</location>
        <location evidence="5">Cytoskeleton</location>
        <location evidence="5">Microtubule organizing center</location>
        <location evidence="5">Centrosome</location>
        <location evidence="5">Centriolar satellite</location>
    </subcellularLocation>
    <subcellularLocation>
        <location evidence="3">Apical cell membrane</location>
    </subcellularLocation>
    <subcellularLocation>
        <location evidence="2">Dynein axonemal particle</location>
    </subcellularLocation>
</comment>
<comment type="similarity">
    <text evidence="6">Belongs to the ZMYND10 family.</text>
</comment>
<accession>Q6AXZ5</accession>
<name>ZMY10_RAT</name>
<evidence type="ECO:0000250" key="1">
    <source>
        <dbReference type="UniProtKB" id="O75800"/>
    </source>
</evidence>
<evidence type="ECO:0000250" key="2">
    <source>
        <dbReference type="UniProtKB" id="Q5FWU8"/>
    </source>
</evidence>
<evidence type="ECO:0000250" key="3">
    <source>
        <dbReference type="UniProtKB" id="Q99ML0"/>
    </source>
</evidence>
<evidence type="ECO:0000255" key="4">
    <source>
        <dbReference type="PROSITE-ProRule" id="PRU00134"/>
    </source>
</evidence>
<evidence type="ECO:0000269" key="5">
    <source>
    </source>
</evidence>
<evidence type="ECO:0000305" key="6"/>
<organism>
    <name type="scientific">Rattus norvegicus</name>
    <name type="common">Rat</name>
    <dbReference type="NCBI Taxonomy" id="10116"/>
    <lineage>
        <taxon>Eukaryota</taxon>
        <taxon>Metazoa</taxon>
        <taxon>Chordata</taxon>
        <taxon>Craniata</taxon>
        <taxon>Vertebrata</taxon>
        <taxon>Euteleostomi</taxon>
        <taxon>Mammalia</taxon>
        <taxon>Eutheria</taxon>
        <taxon>Euarchontoglires</taxon>
        <taxon>Glires</taxon>
        <taxon>Rodentia</taxon>
        <taxon>Myomorpha</taxon>
        <taxon>Muroidea</taxon>
        <taxon>Muridae</taxon>
        <taxon>Murinae</taxon>
        <taxon>Rattus</taxon>
    </lineage>
</organism>
<keyword id="KW-1003">Cell membrane</keyword>
<keyword id="KW-0963">Cytoplasm</keyword>
<keyword id="KW-0206">Cytoskeleton</keyword>
<keyword id="KW-0472">Membrane</keyword>
<keyword id="KW-0479">Metal-binding</keyword>
<keyword id="KW-1185">Reference proteome</keyword>
<keyword id="KW-0862">Zinc</keyword>
<keyword id="KW-0863">Zinc-finger</keyword>
<reference key="1">
    <citation type="journal article" date="2004" name="Nature">
        <title>Genome sequence of the Brown Norway rat yields insights into mammalian evolution.</title>
        <authorList>
            <person name="Gibbs R.A."/>
            <person name="Weinstock G.M."/>
            <person name="Metzker M.L."/>
            <person name="Muzny D.M."/>
            <person name="Sodergren E.J."/>
            <person name="Scherer S."/>
            <person name="Scott G."/>
            <person name="Steffen D."/>
            <person name="Worley K.C."/>
            <person name="Burch P.E."/>
            <person name="Okwuonu G."/>
            <person name="Hines S."/>
            <person name="Lewis L."/>
            <person name="Deramo C."/>
            <person name="Delgado O."/>
            <person name="Dugan-Rocha S."/>
            <person name="Miner G."/>
            <person name="Morgan M."/>
            <person name="Hawes A."/>
            <person name="Gill R."/>
            <person name="Holt R.A."/>
            <person name="Adams M.D."/>
            <person name="Amanatides P.G."/>
            <person name="Baden-Tillson H."/>
            <person name="Barnstead M."/>
            <person name="Chin S."/>
            <person name="Evans C.A."/>
            <person name="Ferriera S."/>
            <person name="Fosler C."/>
            <person name="Glodek A."/>
            <person name="Gu Z."/>
            <person name="Jennings D."/>
            <person name="Kraft C.L."/>
            <person name="Nguyen T."/>
            <person name="Pfannkoch C.M."/>
            <person name="Sitter C."/>
            <person name="Sutton G.G."/>
            <person name="Venter J.C."/>
            <person name="Woodage T."/>
            <person name="Smith D."/>
            <person name="Lee H.-M."/>
            <person name="Gustafson E."/>
            <person name="Cahill P."/>
            <person name="Kana A."/>
            <person name="Doucette-Stamm L."/>
            <person name="Weinstock K."/>
            <person name="Fechtel K."/>
            <person name="Weiss R.B."/>
            <person name="Dunn D.M."/>
            <person name="Green E.D."/>
            <person name="Blakesley R.W."/>
            <person name="Bouffard G.G."/>
            <person name="De Jong P.J."/>
            <person name="Osoegawa K."/>
            <person name="Zhu B."/>
            <person name="Marra M."/>
            <person name="Schein J."/>
            <person name="Bosdet I."/>
            <person name="Fjell C."/>
            <person name="Jones S."/>
            <person name="Krzywinski M."/>
            <person name="Mathewson C."/>
            <person name="Siddiqui A."/>
            <person name="Wye N."/>
            <person name="McPherson J."/>
            <person name="Zhao S."/>
            <person name="Fraser C.M."/>
            <person name="Shetty J."/>
            <person name="Shatsman S."/>
            <person name="Geer K."/>
            <person name="Chen Y."/>
            <person name="Abramzon S."/>
            <person name="Nierman W.C."/>
            <person name="Havlak P.H."/>
            <person name="Chen R."/>
            <person name="Durbin K.J."/>
            <person name="Egan A."/>
            <person name="Ren Y."/>
            <person name="Song X.-Z."/>
            <person name="Li B."/>
            <person name="Liu Y."/>
            <person name="Qin X."/>
            <person name="Cawley S."/>
            <person name="Cooney A.J."/>
            <person name="D'Souza L.M."/>
            <person name="Martin K."/>
            <person name="Wu J.Q."/>
            <person name="Gonzalez-Garay M.L."/>
            <person name="Jackson A.R."/>
            <person name="Kalafus K.J."/>
            <person name="McLeod M.P."/>
            <person name="Milosavljevic A."/>
            <person name="Virk D."/>
            <person name="Volkov A."/>
            <person name="Wheeler D.A."/>
            <person name="Zhang Z."/>
            <person name="Bailey J.A."/>
            <person name="Eichler E.E."/>
            <person name="Tuzun E."/>
            <person name="Birney E."/>
            <person name="Mongin E."/>
            <person name="Ureta-Vidal A."/>
            <person name="Woodwark C."/>
            <person name="Zdobnov E."/>
            <person name="Bork P."/>
            <person name="Suyama M."/>
            <person name="Torrents D."/>
            <person name="Alexandersson M."/>
            <person name="Trask B.J."/>
            <person name="Young J.M."/>
            <person name="Huang H."/>
            <person name="Wang H."/>
            <person name="Xing H."/>
            <person name="Daniels S."/>
            <person name="Gietzen D."/>
            <person name="Schmidt J."/>
            <person name="Stevens K."/>
            <person name="Vitt U."/>
            <person name="Wingrove J."/>
            <person name="Camara F."/>
            <person name="Mar Alba M."/>
            <person name="Abril J.F."/>
            <person name="Guigo R."/>
            <person name="Smit A."/>
            <person name="Dubchak I."/>
            <person name="Rubin E.M."/>
            <person name="Couronne O."/>
            <person name="Poliakov A."/>
            <person name="Huebner N."/>
            <person name="Ganten D."/>
            <person name="Goesele C."/>
            <person name="Hummel O."/>
            <person name="Kreitler T."/>
            <person name="Lee Y.-A."/>
            <person name="Monti J."/>
            <person name="Schulz H."/>
            <person name="Zimdahl H."/>
            <person name="Himmelbauer H."/>
            <person name="Lehrach H."/>
            <person name="Jacob H.J."/>
            <person name="Bromberg S."/>
            <person name="Gullings-Handley J."/>
            <person name="Jensen-Seaman M.I."/>
            <person name="Kwitek A.E."/>
            <person name="Lazar J."/>
            <person name="Pasko D."/>
            <person name="Tonellato P.J."/>
            <person name="Twigger S."/>
            <person name="Ponting C.P."/>
            <person name="Duarte J.M."/>
            <person name="Rice S."/>
            <person name="Goodstadt L."/>
            <person name="Beatson S.A."/>
            <person name="Emes R.D."/>
            <person name="Winter E.E."/>
            <person name="Webber C."/>
            <person name="Brandt P."/>
            <person name="Nyakatura G."/>
            <person name="Adetobi M."/>
            <person name="Chiaromonte F."/>
            <person name="Elnitski L."/>
            <person name="Eswara P."/>
            <person name="Hardison R.C."/>
            <person name="Hou M."/>
            <person name="Kolbe D."/>
            <person name="Makova K."/>
            <person name="Miller W."/>
            <person name="Nekrutenko A."/>
            <person name="Riemer C."/>
            <person name="Schwartz S."/>
            <person name="Taylor J."/>
            <person name="Yang S."/>
            <person name="Zhang Y."/>
            <person name="Lindpaintner K."/>
            <person name="Andrews T.D."/>
            <person name="Caccamo M."/>
            <person name="Clamp M."/>
            <person name="Clarke L."/>
            <person name="Curwen V."/>
            <person name="Durbin R.M."/>
            <person name="Eyras E."/>
            <person name="Searle S.M."/>
            <person name="Cooper G.M."/>
            <person name="Batzoglou S."/>
            <person name="Brudno M."/>
            <person name="Sidow A."/>
            <person name="Stone E.A."/>
            <person name="Payseur B.A."/>
            <person name="Bourque G."/>
            <person name="Lopez-Otin C."/>
            <person name="Puente X.S."/>
            <person name="Chakrabarti K."/>
            <person name="Chatterji S."/>
            <person name="Dewey C."/>
            <person name="Pachter L."/>
            <person name="Bray N."/>
            <person name="Yap V.B."/>
            <person name="Caspi A."/>
            <person name="Tesler G."/>
            <person name="Pevzner P.A."/>
            <person name="Haussler D."/>
            <person name="Roskin K.M."/>
            <person name="Baertsch R."/>
            <person name="Clawson H."/>
            <person name="Furey T.S."/>
            <person name="Hinrichs A.S."/>
            <person name="Karolchik D."/>
            <person name="Kent W.J."/>
            <person name="Rosenbloom K.R."/>
            <person name="Trumbower H."/>
            <person name="Weirauch M."/>
            <person name="Cooper D.N."/>
            <person name="Stenson P.D."/>
            <person name="Ma B."/>
            <person name="Brent M."/>
            <person name="Arumugam M."/>
            <person name="Shteynberg D."/>
            <person name="Copley R.R."/>
            <person name="Taylor M.S."/>
            <person name="Riethman H."/>
            <person name="Mudunuri U."/>
            <person name="Peterson J."/>
            <person name="Guyer M."/>
            <person name="Felsenfeld A."/>
            <person name="Old S."/>
            <person name="Mockrin S."/>
            <person name="Collins F.S."/>
        </authorList>
    </citation>
    <scope>NUCLEOTIDE SEQUENCE [LARGE SCALE GENOMIC DNA]</scope>
    <source>
        <strain>Brown Norway</strain>
    </source>
</reference>
<reference key="2">
    <citation type="submission" date="2005-07" db="EMBL/GenBank/DDBJ databases">
        <authorList>
            <person name="Mural R.J."/>
            <person name="Adams M.D."/>
            <person name="Myers E.W."/>
            <person name="Smith H.O."/>
            <person name="Venter J.C."/>
        </authorList>
    </citation>
    <scope>NUCLEOTIDE SEQUENCE [LARGE SCALE GENOMIC DNA]</scope>
</reference>
<reference key="3">
    <citation type="journal article" date="2004" name="Genome Res.">
        <title>The status, quality, and expansion of the NIH full-length cDNA project: the Mammalian Gene Collection (MGC).</title>
        <authorList>
            <consortium name="The MGC Project Team"/>
        </authorList>
    </citation>
    <scope>NUCLEOTIDE SEQUENCE [LARGE SCALE MRNA]</scope>
    <source>
        <tissue>Testis</tissue>
    </source>
</reference>
<reference key="4">
    <citation type="journal article" date="2013" name="Am. J. Hum. Genet.">
        <title>ZMYND10 is mutated in primary ciliary dyskinesia and interacts with LRRC6.</title>
        <authorList>
            <person name="Zariwala M.A."/>
            <person name="Gee H.Y."/>
            <person name="Kurkowiak M."/>
            <person name="Al-Mutairi D.A."/>
            <person name="Leigh M.W."/>
            <person name="Hurd T.W."/>
            <person name="Hjeij R."/>
            <person name="Dell S.D."/>
            <person name="Chaki M."/>
            <person name="Dougherty G.W."/>
            <person name="Adan M."/>
            <person name="Spear P.C."/>
            <person name="Esteve-Rudd J."/>
            <person name="Loges N.T."/>
            <person name="Rosenfeld M."/>
            <person name="Diaz K.A."/>
            <person name="Olbrich H."/>
            <person name="Wolf W.E."/>
            <person name="Sheridan E."/>
            <person name="Batten T.F."/>
            <person name="Halbritter J."/>
            <person name="Porath J.D."/>
            <person name="Kohl S."/>
            <person name="Lovric S."/>
            <person name="Hwang D.Y."/>
            <person name="Pittman J.E."/>
            <person name="Burns K.A."/>
            <person name="Ferkol T.W."/>
            <person name="Sagel S.D."/>
            <person name="Olivier K.N."/>
            <person name="Morgan L.C."/>
            <person name="Werner C."/>
            <person name="Raidt J."/>
            <person name="Pennekamp P."/>
            <person name="Sun Z."/>
            <person name="Zhou W."/>
            <person name="Airik R."/>
            <person name="Natarajan S."/>
            <person name="Allen S.J."/>
            <person name="Amirav I."/>
            <person name="Wieczorek D."/>
            <person name="Landwehr K."/>
            <person name="Nielsen K."/>
            <person name="Schwerk N."/>
            <person name="Sertic J."/>
            <person name="Kohler G."/>
            <person name="Washburn J."/>
            <person name="Levy S."/>
            <person name="Fan S."/>
            <person name="Koerner-Rettberg C."/>
            <person name="Amselem S."/>
            <person name="Williams D.S."/>
            <person name="Mitchell B.J."/>
            <person name="Drummond I.A."/>
            <person name="Otto E.A."/>
            <person name="Omran H."/>
            <person name="Knowles M.R."/>
            <person name="Hildebrandt F."/>
        </authorList>
    </citation>
    <scope>SUBCELLULAR LOCATION</scope>
</reference>
<sequence length="440" mass="50675">MGDLELLLPGEAEVLVQGLHSFQLREMGSEGWSKQHENLEKLNMQAILDATVSQAEPIQELLVTHGKIPTLVEELIAVEMWKQKVFPVLCRLEDFKPQNTFPIYMVVHHEASIINLLETVFFHKEVCESADDTVLDLVDYCHRKLILLVARKGGGDLSEEERFQDSTPMQELQKQAEMMEFEISLKALSVLRYITDCMDSLSLSTLNRMLTTHNLPCLLVELLEHSPWSRREGGKLQHFESGRWQTVAPSEHQKLNKLDGQVWIALYNLLLSPEARTRYCLTNFAKGQLLKLQAFLTDTLLDQLPNLADLKSFLAHLALVETQPPKKDLVLEQIPEIWDRLERENKGKWQAIAKHQLQHVFSLSEKDLRQQAQRWAETYRLDVLEAVAPERPRCAYCSAEASKRCSRCQKVWYCCRECQVKHWEKHGKTCVLAAQGDRAK</sequence>
<dbReference type="EMBL" id="AABR06057029">
    <property type="status" value="NOT_ANNOTATED_CDS"/>
    <property type="molecule type" value="Genomic_DNA"/>
</dbReference>
<dbReference type="EMBL" id="CH473954">
    <property type="protein sequence ID" value="EDL77250.1"/>
    <property type="molecule type" value="Genomic_DNA"/>
</dbReference>
<dbReference type="EMBL" id="BC079255">
    <property type="protein sequence ID" value="AAH79255.1"/>
    <property type="molecule type" value="mRNA"/>
</dbReference>
<dbReference type="RefSeq" id="NP_001004284.1">
    <property type="nucleotide sequence ID" value="NM_001004284.1"/>
</dbReference>
<dbReference type="SMR" id="Q6AXZ5"/>
<dbReference type="CORUM" id="Q6AXZ5"/>
<dbReference type="FunCoup" id="Q6AXZ5">
    <property type="interactions" value="345"/>
</dbReference>
<dbReference type="STRING" id="10116.ENSRNOP00000031055"/>
<dbReference type="iPTMnet" id="Q6AXZ5"/>
<dbReference type="PhosphoSitePlus" id="Q6AXZ5"/>
<dbReference type="PaxDb" id="10116-ENSRNOP00000031055"/>
<dbReference type="Ensembl" id="ENSRNOT00000039258.4">
    <property type="protein sequence ID" value="ENSRNOP00000031055.3"/>
    <property type="gene ID" value="ENSRNOG00000021602.4"/>
</dbReference>
<dbReference type="GeneID" id="363139"/>
<dbReference type="KEGG" id="rno:363139"/>
<dbReference type="UCSC" id="RGD:1303250">
    <property type="organism name" value="rat"/>
</dbReference>
<dbReference type="AGR" id="RGD:1303250"/>
<dbReference type="CTD" id="51364"/>
<dbReference type="RGD" id="1303250">
    <property type="gene designation" value="Zmynd10"/>
</dbReference>
<dbReference type="eggNOG" id="ENOG502QS3F">
    <property type="taxonomic scope" value="Eukaryota"/>
</dbReference>
<dbReference type="GeneTree" id="ENSGT00940000153820"/>
<dbReference type="HOGENOM" id="CLU_034036_1_0_1"/>
<dbReference type="InParanoid" id="Q6AXZ5"/>
<dbReference type="OMA" id="LIHEAYC"/>
<dbReference type="OrthoDB" id="432970at2759"/>
<dbReference type="PhylomeDB" id="Q6AXZ5"/>
<dbReference type="TreeFam" id="TF324215"/>
<dbReference type="PRO" id="PR:Q6AXZ5"/>
<dbReference type="Proteomes" id="UP000002494">
    <property type="component" value="Chromosome 8"/>
</dbReference>
<dbReference type="Proteomes" id="UP000234681">
    <property type="component" value="Chromosome 8"/>
</dbReference>
<dbReference type="Bgee" id="ENSRNOG00000021602">
    <property type="expression patterns" value="Expressed in testis and 19 other cell types or tissues"/>
</dbReference>
<dbReference type="GO" id="GO:0016324">
    <property type="term" value="C:apical plasma membrane"/>
    <property type="evidence" value="ECO:0000250"/>
    <property type="project" value="UniProtKB"/>
</dbReference>
<dbReference type="GO" id="GO:0034451">
    <property type="term" value="C:centriolar satellite"/>
    <property type="evidence" value="ECO:0000314"/>
    <property type="project" value="UniProtKB"/>
</dbReference>
<dbReference type="GO" id="GO:0005737">
    <property type="term" value="C:cytoplasm"/>
    <property type="evidence" value="ECO:0000266"/>
    <property type="project" value="RGD"/>
</dbReference>
<dbReference type="GO" id="GO:0120293">
    <property type="term" value="C:dynein axonemal particle"/>
    <property type="evidence" value="ECO:0000250"/>
    <property type="project" value="UniProtKB"/>
</dbReference>
<dbReference type="GO" id="GO:0060090">
    <property type="term" value="F:molecular adaptor activity"/>
    <property type="evidence" value="ECO:0000266"/>
    <property type="project" value="RGD"/>
</dbReference>
<dbReference type="GO" id="GO:0044183">
    <property type="term" value="F:protein folding chaperone"/>
    <property type="evidence" value="ECO:0000266"/>
    <property type="project" value="RGD"/>
</dbReference>
<dbReference type="GO" id="GO:0008270">
    <property type="term" value="F:zinc ion binding"/>
    <property type="evidence" value="ECO:0007669"/>
    <property type="project" value="UniProtKB-KW"/>
</dbReference>
<dbReference type="GO" id="GO:0003341">
    <property type="term" value="P:cilium movement"/>
    <property type="evidence" value="ECO:0000266"/>
    <property type="project" value="RGD"/>
</dbReference>
<dbReference type="GO" id="GO:0036159">
    <property type="term" value="P:inner dynein arm assembly"/>
    <property type="evidence" value="ECO:0000250"/>
    <property type="project" value="UniProtKB"/>
</dbReference>
<dbReference type="GO" id="GO:0044458">
    <property type="term" value="P:motile cilium assembly"/>
    <property type="evidence" value="ECO:0000250"/>
    <property type="project" value="UniProtKB"/>
</dbReference>
<dbReference type="GO" id="GO:0036158">
    <property type="term" value="P:outer dynein arm assembly"/>
    <property type="evidence" value="ECO:0000250"/>
    <property type="project" value="UniProtKB"/>
</dbReference>
<dbReference type="GO" id="GO:1905505">
    <property type="term" value="P:positive regulation of motile cilium assembly"/>
    <property type="evidence" value="ECO:0000250"/>
    <property type="project" value="UniProtKB"/>
</dbReference>
<dbReference type="GO" id="GO:0006457">
    <property type="term" value="P:protein folding"/>
    <property type="evidence" value="ECO:0000266"/>
    <property type="project" value="RGD"/>
</dbReference>
<dbReference type="GO" id="GO:0061512">
    <property type="term" value="P:protein localization to cilium"/>
    <property type="evidence" value="ECO:0000266"/>
    <property type="project" value="RGD"/>
</dbReference>
<dbReference type="FunFam" id="6.10.140.2220:FF:000009">
    <property type="entry name" value="Zinc finger MYND domain-containing protein 10"/>
    <property type="match status" value="1"/>
</dbReference>
<dbReference type="Gene3D" id="6.10.140.2220">
    <property type="match status" value="1"/>
</dbReference>
<dbReference type="InterPro" id="IPR017333">
    <property type="entry name" value="UCP037948_Znf-MYND"/>
</dbReference>
<dbReference type="InterPro" id="IPR052298">
    <property type="entry name" value="ZMYND10"/>
</dbReference>
<dbReference type="InterPro" id="IPR002893">
    <property type="entry name" value="Znf_MYND"/>
</dbReference>
<dbReference type="PANTHER" id="PTHR13244">
    <property type="entry name" value="ZINC FINGER MYND DOMAIN CONTAINING PROTEIN 10"/>
    <property type="match status" value="1"/>
</dbReference>
<dbReference type="PANTHER" id="PTHR13244:SF7">
    <property type="entry name" value="ZINC FINGER MYND DOMAIN-CONTAINING PROTEIN 10"/>
    <property type="match status" value="1"/>
</dbReference>
<dbReference type="Pfam" id="PF01753">
    <property type="entry name" value="zf-MYND"/>
    <property type="match status" value="1"/>
</dbReference>
<dbReference type="PIRSF" id="PIRSF037948">
    <property type="entry name" value="UCP037948_Znf_MYND10"/>
    <property type="match status" value="1"/>
</dbReference>
<dbReference type="SUPFAM" id="SSF144232">
    <property type="entry name" value="HIT/MYND zinc finger-like"/>
    <property type="match status" value="1"/>
</dbReference>
<dbReference type="PROSITE" id="PS01360">
    <property type="entry name" value="ZF_MYND_1"/>
    <property type="match status" value="1"/>
</dbReference>
<dbReference type="PROSITE" id="PS50865">
    <property type="entry name" value="ZF_MYND_2"/>
    <property type="match status" value="1"/>
</dbReference>
<protein>
    <recommendedName>
        <fullName>Zinc finger MYND domain-containing protein 10</fullName>
    </recommendedName>
</protein>